<evidence type="ECO:0000255" key="1">
    <source>
        <dbReference type="HAMAP-Rule" id="MF_01503"/>
    </source>
</evidence>
<dbReference type="EMBL" id="CP000859">
    <property type="protein sequence ID" value="ABW67715.1"/>
    <property type="molecule type" value="Genomic_DNA"/>
</dbReference>
<dbReference type="RefSeq" id="WP_012175327.1">
    <property type="nucleotide sequence ID" value="NC_009943.1"/>
</dbReference>
<dbReference type="SMR" id="A8ZSH8"/>
<dbReference type="STRING" id="96561.Dole_1911"/>
<dbReference type="KEGG" id="dol:Dole_1911"/>
<dbReference type="eggNOG" id="COG2052">
    <property type="taxonomic scope" value="Bacteria"/>
</dbReference>
<dbReference type="HOGENOM" id="CLU_165326_1_0_7"/>
<dbReference type="OrthoDB" id="5432174at2"/>
<dbReference type="Proteomes" id="UP000008561">
    <property type="component" value="Chromosome"/>
</dbReference>
<dbReference type="HAMAP" id="MF_01503">
    <property type="entry name" value="RemA"/>
    <property type="match status" value="1"/>
</dbReference>
<dbReference type="InterPro" id="IPR007169">
    <property type="entry name" value="RemA-like"/>
</dbReference>
<dbReference type="NCBIfam" id="NF003315">
    <property type="entry name" value="PRK04323.1"/>
    <property type="match status" value="1"/>
</dbReference>
<dbReference type="PANTHER" id="PTHR38449:SF1">
    <property type="entry name" value="REGULATORY PROTEIN SSL2874-RELATED"/>
    <property type="match status" value="1"/>
</dbReference>
<dbReference type="PANTHER" id="PTHR38449">
    <property type="entry name" value="REGULATORY PROTEIN TM_1690-RELATED"/>
    <property type="match status" value="1"/>
</dbReference>
<dbReference type="Pfam" id="PF04025">
    <property type="entry name" value="RemA-like"/>
    <property type="match status" value="1"/>
</dbReference>
<sequence length="97" mass="10557">MHRKNLLNIGFGNRIVAEDIIAVVSPASAPVKRMKDEAKKAGRLVDATQGRKTRSVIVMASNHVILSAIHTETISQRFAAINGNRLGPDDDPDLMPE</sequence>
<comment type="similarity">
    <text evidence="1">Belongs to the RemA family.</text>
</comment>
<feature type="chain" id="PRO_0000373784" description="Putative regulatory protein Dole_1911">
    <location>
        <begin position="1"/>
        <end position="97"/>
    </location>
</feature>
<name>Y1911_DESOH</name>
<reference key="1">
    <citation type="submission" date="2007-10" db="EMBL/GenBank/DDBJ databases">
        <title>Complete sequence of Desulfococcus oleovorans Hxd3.</title>
        <authorList>
            <consortium name="US DOE Joint Genome Institute"/>
            <person name="Copeland A."/>
            <person name="Lucas S."/>
            <person name="Lapidus A."/>
            <person name="Barry K."/>
            <person name="Glavina del Rio T."/>
            <person name="Dalin E."/>
            <person name="Tice H."/>
            <person name="Pitluck S."/>
            <person name="Kiss H."/>
            <person name="Brettin T."/>
            <person name="Bruce D."/>
            <person name="Detter J.C."/>
            <person name="Han C."/>
            <person name="Schmutz J."/>
            <person name="Larimer F."/>
            <person name="Land M."/>
            <person name="Hauser L."/>
            <person name="Kyrpides N."/>
            <person name="Kim E."/>
            <person name="Wawrik B."/>
            <person name="Richardson P."/>
        </authorList>
    </citation>
    <scope>NUCLEOTIDE SEQUENCE [LARGE SCALE GENOMIC DNA]</scope>
    <source>
        <strain>DSM 6200 / JCM 39069 / Hxd3</strain>
    </source>
</reference>
<accession>A8ZSH8</accession>
<gene>
    <name type="ordered locus">Dole_1911</name>
</gene>
<keyword id="KW-1185">Reference proteome</keyword>
<protein>
    <recommendedName>
        <fullName evidence="1">Putative regulatory protein Dole_1911</fullName>
    </recommendedName>
</protein>
<organism>
    <name type="scientific">Desulfosudis oleivorans (strain DSM 6200 / JCM 39069 / Hxd3)</name>
    <name type="common">Desulfococcus oleovorans</name>
    <dbReference type="NCBI Taxonomy" id="96561"/>
    <lineage>
        <taxon>Bacteria</taxon>
        <taxon>Pseudomonadati</taxon>
        <taxon>Thermodesulfobacteriota</taxon>
        <taxon>Desulfobacteria</taxon>
        <taxon>Desulfobacterales</taxon>
        <taxon>Desulfosudaceae</taxon>
        <taxon>Desulfosudis</taxon>
    </lineage>
</organism>
<proteinExistence type="inferred from homology"/>